<reference key="1">
    <citation type="journal article" date="2006" name="J. Virol.">
        <title>Genome of invertebrate iridescent virus type 3 (mosquito iridescent virus).</title>
        <authorList>
            <person name="Delhon G."/>
            <person name="Tulman E.R."/>
            <person name="Afonso C.L."/>
            <person name="Lu Z."/>
            <person name="Becnel J.J."/>
            <person name="Moser B.A."/>
            <person name="Kutish G.F."/>
            <person name="Rock D.L."/>
        </authorList>
    </citation>
    <scope>NUCLEOTIDE SEQUENCE [LARGE SCALE GENOMIC DNA]</scope>
</reference>
<comment type="subcellular location">
    <subcellularLocation>
        <location evidence="2">Membrane</location>
        <topology evidence="2">Single-pass membrane protein</topology>
    </subcellularLocation>
</comment>
<comment type="similarity">
    <text evidence="2">Belongs to the IIV-6 466R family.</text>
</comment>
<feature type="chain" id="PRO_0000377798" description="Uncharacterized protein 112R">
    <location>
        <begin position="1"/>
        <end position="112"/>
    </location>
</feature>
<feature type="transmembrane region" description="Helical" evidence="1">
    <location>
        <begin position="89"/>
        <end position="106"/>
    </location>
</feature>
<sequence>MGRQVTPIYPRTNGTIQPVNFPIRNMEPPNHSLQSAGFQIPPPDAQFPRYHAAAPHHPRVEAAAPSCLDVARHVESCPICSRIHDTDKTLYVLVIVGLTILCFLLVKRILKL</sequence>
<keyword id="KW-0472">Membrane</keyword>
<keyword id="KW-1185">Reference proteome</keyword>
<keyword id="KW-0812">Transmembrane</keyword>
<keyword id="KW-1133">Transmembrane helix</keyword>
<accession>Q196U8</accession>
<name>VF466_IIV3</name>
<protein>
    <recommendedName>
        <fullName>Uncharacterized protein 112R</fullName>
    </recommendedName>
</protein>
<organismHost>
    <name type="scientific">Aedes vexans</name>
    <name type="common">Inland floodwater mosquito</name>
    <name type="synonym">Culex vexans</name>
    <dbReference type="NCBI Taxonomy" id="7163"/>
</organismHost>
<organismHost>
    <name type="scientific">Culex territans</name>
    <dbReference type="NCBI Taxonomy" id="42431"/>
</organismHost>
<organismHost>
    <name type="scientific">Culiseta annulata</name>
    <dbReference type="NCBI Taxonomy" id="332058"/>
</organismHost>
<organismHost>
    <name type="scientific">Ochlerotatus sollicitans</name>
    <name type="common">eastern saltmarsh mosquito</name>
    <dbReference type="NCBI Taxonomy" id="310513"/>
</organismHost>
<organismHost>
    <name type="scientific">Ochlerotatus taeniorhynchus</name>
    <name type="common">Black salt marsh mosquito</name>
    <name type="synonym">Aedes taeniorhynchus</name>
    <dbReference type="NCBI Taxonomy" id="329105"/>
</organismHost>
<organismHost>
    <name type="scientific">Psorophora ferox</name>
    <dbReference type="NCBI Taxonomy" id="7183"/>
</organismHost>
<gene>
    <name type="ORF">IIV3-112R</name>
</gene>
<dbReference type="EMBL" id="DQ643392">
    <property type="protein sequence ID" value="ABF82142.1"/>
    <property type="molecule type" value="Genomic_DNA"/>
</dbReference>
<dbReference type="RefSeq" id="YP_654684.1">
    <property type="nucleotide sequence ID" value="NC_008187.1"/>
</dbReference>
<dbReference type="SMR" id="Q196U8"/>
<dbReference type="KEGG" id="vg:4156323"/>
<dbReference type="OrthoDB" id="28135at10239"/>
<dbReference type="Proteomes" id="UP000001358">
    <property type="component" value="Genome"/>
</dbReference>
<dbReference type="GO" id="GO:0016020">
    <property type="term" value="C:membrane"/>
    <property type="evidence" value="ECO:0007669"/>
    <property type="project" value="UniProtKB-SubCell"/>
</dbReference>
<evidence type="ECO:0000255" key="1"/>
<evidence type="ECO:0000305" key="2"/>
<organism>
    <name type="scientific">Invertebrate iridescent virus 3</name>
    <name type="common">IIV-3</name>
    <name type="synonym">Mosquito iridescent virus</name>
    <dbReference type="NCBI Taxonomy" id="345201"/>
    <lineage>
        <taxon>Viruses</taxon>
        <taxon>Varidnaviria</taxon>
        <taxon>Bamfordvirae</taxon>
        <taxon>Nucleocytoviricota</taxon>
        <taxon>Megaviricetes</taxon>
        <taxon>Pimascovirales</taxon>
        <taxon>Iridoviridae</taxon>
        <taxon>Betairidovirinae</taxon>
        <taxon>Chloriridovirus</taxon>
    </lineage>
</organism>
<proteinExistence type="inferred from homology"/>